<gene>
    <name type="primary">MED1</name>
    <name type="synonym">Trap220</name>
    <name type="ORF">CG7162</name>
</gene>
<evidence type="ECO:0000250" key="1"/>
<evidence type="ECO:0000256" key="2">
    <source>
        <dbReference type="SAM" id="MobiDB-lite"/>
    </source>
</evidence>
<evidence type="ECO:0000269" key="3">
    <source>
    </source>
</evidence>
<evidence type="ECO:0000269" key="4">
    <source>
    </source>
</evidence>
<evidence type="ECO:0000305" key="5"/>
<protein>
    <recommendedName>
        <fullName>Mediator of RNA polymerase II transcription subunit 1</fullName>
    </recommendedName>
    <alternativeName>
        <fullName>Mediator complex subunit 1</fullName>
    </alternativeName>
    <alternativeName>
        <fullName>dTRAP220</fullName>
    </alternativeName>
</protein>
<dbReference type="EMBL" id="AF289996">
    <property type="protein sequence ID" value="AAG02461.1"/>
    <property type="molecule type" value="mRNA"/>
</dbReference>
<dbReference type="EMBL" id="AE014296">
    <property type="protein sequence ID" value="AAF51757.2"/>
    <property type="molecule type" value="Genomic_DNA"/>
</dbReference>
<dbReference type="EMBL" id="BT044447">
    <property type="protein sequence ID" value="ACH92512.1"/>
    <property type="molecule type" value="mRNA"/>
</dbReference>
<dbReference type="RefSeq" id="NP_649341.1">
    <property type="nucleotide sequence ID" value="NM_141084.3"/>
</dbReference>
<dbReference type="SMR" id="Q9VP05"/>
<dbReference type="BioGRID" id="65647">
    <property type="interactions" value="11"/>
</dbReference>
<dbReference type="ComplexPortal" id="CPX-2308">
    <property type="entry name" value="Core mediator complex"/>
</dbReference>
<dbReference type="FunCoup" id="Q9VP05">
    <property type="interactions" value="404"/>
</dbReference>
<dbReference type="IntAct" id="Q9VP05">
    <property type="interactions" value="78"/>
</dbReference>
<dbReference type="STRING" id="7227.FBpp0078118"/>
<dbReference type="GlyGen" id="Q9VP05">
    <property type="glycosylation" value="4 sites"/>
</dbReference>
<dbReference type="iPTMnet" id="Q9VP05"/>
<dbReference type="PaxDb" id="7227-FBpp0078118"/>
<dbReference type="DNASU" id="40403"/>
<dbReference type="EnsemblMetazoa" id="FBtr0078464">
    <property type="protein sequence ID" value="FBpp0078118"/>
    <property type="gene ID" value="FBgn0037109"/>
</dbReference>
<dbReference type="GeneID" id="40403"/>
<dbReference type="KEGG" id="dme:Dmel_CG7162"/>
<dbReference type="AGR" id="FB:FBgn0037109"/>
<dbReference type="CTD" id="5469"/>
<dbReference type="FlyBase" id="FBgn0037109">
    <property type="gene designation" value="MED1"/>
</dbReference>
<dbReference type="VEuPathDB" id="VectorBase:FBgn0037109"/>
<dbReference type="eggNOG" id="ENOG502QPZ7">
    <property type="taxonomic scope" value="Eukaryota"/>
</dbReference>
<dbReference type="GeneTree" id="ENSGT00660000095569"/>
<dbReference type="InParanoid" id="Q9VP05"/>
<dbReference type="OMA" id="NMKERHE"/>
<dbReference type="OrthoDB" id="2281547at2759"/>
<dbReference type="PhylomeDB" id="Q9VP05"/>
<dbReference type="Reactome" id="R-DME-383280">
    <property type="pathway name" value="Nuclear Receptor transcription pathway"/>
</dbReference>
<dbReference type="Reactome" id="R-DME-400206">
    <property type="pathway name" value="Regulation of lipid metabolism by PPARalpha"/>
</dbReference>
<dbReference type="Reactome" id="R-DME-9018519">
    <property type="pathway name" value="Estrogen-dependent gene expression"/>
</dbReference>
<dbReference type="Reactome" id="R-DME-9707564">
    <property type="pathway name" value="Cytoprotection by HMOX1"/>
</dbReference>
<dbReference type="Reactome" id="R-DME-9841922">
    <property type="pathway name" value="MLL4 and MLL3 complexes regulate expression of PPARG target genes in adipogenesis and hepatic steatosis"/>
</dbReference>
<dbReference type="SignaLink" id="Q9VP05"/>
<dbReference type="BioGRID-ORCS" id="40403">
    <property type="hits" value="0 hits in 1 CRISPR screen"/>
</dbReference>
<dbReference type="ChiTaRS" id="MED1">
    <property type="organism name" value="fly"/>
</dbReference>
<dbReference type="GenomeRNAi" id="40403"/>
<dbReference type="PRO" id="PR:Q9VP05"/>
<dbReference type="Proteomes" id="UP000000803">
    <property type="component" value="Chromosome 3L"/>
</dbReference>
<dbReference type="Bgee" id="FBgn0037109">
    <property type="expression patterns" value="Expressed in outer photoreceptor cell (Drosophila) in insect head and 108 other cell types or tissues"/>
</dbReference>
<dbReference type="ExpressionAtlas" id="Q9VP05">
    <property type="expression patterns" value="baseline and differential"/>
</dbReference>
<dbReference type="GO" id="GO:0016592">
    <property type="term" value="C:mediator complex"/>
    <property type="evidence" value="ECO:0000315"/>
    <property type="project" value="FlyBase"/>
</dbReference>
<dbReference type="GO" id="GO:0005634">
    <property type="term" value="C:nucleus"/>
    <property type="evidence" value="ECO:0000305"/>
    <property type="project" value="FlyBase"/>
</dbReference>
<dbReference type="GO" id="GO:0003712">
    <property type="term" value="F:transcription coregulator activity"/>
    <property type="evidence" value="ECO:0000315"/>
    <property type="project" value="UniProtKB"/>
</dbReference>
<dbReference type="GO" id="GO:0045944">
    <property type="term" value="P:positive regulation of transcription by RNA polymerase II"/>
    <property type="evidence" value="ECO:0000316"/>
    <property type="project" value="FlyBase"/>
</dbReference>
<dbReference type="GO" id="GO:0006357">
    <property type="term" value="P:regulation of transcription by RNA polymerase II"/>
    <property type="evidence" value="ECO:0000315"/>
    <property type="project" value="UniProtKB"/>
</dbReference>
<dbReference type="InterPro" id="IPR051999">
    <property type="entry name" value="Mediator_complex_subunit_1"/>
</dbReference>
<dbReference type="InterPro" id="IPR019680">
    <property type="entry name" value="Mediator_Med1"/>
</dbReference>
<dbReference type="PANTHER" id="PTHR12881">
    <property type="entry name" value="MEDIATOR OF RNA POLYMERASE II TRANSCRIPTION SUBUNIT 1"/>
    <property type="match status" value="1"/>
</dbReference>
<dbReference type="PANTHER" id="PTHR12881:SF10">
    <property type="entry name" value="MEDIATOR OF RNA POLYMERASE II TRANSCRIPTION SUBUNIT 1"/>
    <property type="match status" value="1"/>
</dbReference>
<dbReference type="Pfam" id="PF10744">
    <property type="entry name" value="Med1"/>
    <property type="match status" value="1"/>
</dbReference>
<name>MED1_DROME</name>
<accession>Q9VP05</accession>
<accession>B5RJH3</accession>
<accession>Q9GYW7</accession>
<keyword id="KW-0010">Activator</keyword>
<keyword id="KW-0539">Nucleus</keyword>
<keyword id="KW-0597">Phosphoprotein</keyword>
<keyword id="KW-1185">Reference proteome</keyword>
<keyword id="KW-0804">Transcription</keyword>
<keyword id="KW-0805">Transcription regulation</keyword>
<organism>
    <name type="scientific">Drosophila melanogaster</name>
    <name type="common">Fruit fly</name>
    <dbReference type="NCBI Taxonomy" id="7227"/>
    <lineage>
        <taxon>Eukaryota</taxon>
        <taxon>Metazoa</taxon>
        <taxon>Ecdysozoa</taxon>
        <taxon>Arthropoda</taxon>
        <taxon>Hexapoda</taxon>
        <taxon>Insecta</taxon>
        <taxon>Pterygota</taxon>
        <taxon>Neoptera</taxon>
        <taxon>Endopterygota</taxon>
        <taxon>Diptera</taxon>
        <taxon>Brachycera</taxon>
        <taxon>Muscomorpha</taxon>
        <taxon>Ephydroidea</taxon>
        <taxon>Drosophilidae</taxon>
        <taxon>Drosophila</taxon>
        <taxon>Sophophora</taxon>
    </lineage>
</organism>
<feature type="chain" id="PRO_0000302023" description="Mediator of RNA polymerase II transcription subunit 1">
    <location>
        <begin position="1"/>
        <end position="1475"/>
    </location>
</feature>
<feature type="region of interest" description="Disordered" evidence="2">
    <location>
        <begin position="1"/>
        <end position="26"/>
    </location>
</feature>
<feature type="region of interest" description="Disordered" evidence="2">
    <location>
        <begin position="616"/>
        <end position="644"/>
    </location>
</feature>
<feature type="region of interest" description="Disordered" evidence="2">
    <location>
        <begin position="709"/>
        <end position="992"/>
    </location>
</feature>
<feature type="region of interest" description="Disordered" evidence="2">
    <location>
        <begin position="1135"/>
        <end position="1166"/>
    </location>
</feature>
<feature type="region of interest" description="Disordered" evidence="2">
    <location>
        <begin position="1184"/>
        <end position="1245"/>
    </location>
</feature>
<feature type="region of interest" description="Disordered" evidence="2">
    <location>
        <begin position="1263"/>
        <end position="1354"/>
    </location>
</feature>
<feature type="region of interest" description="Disordered" evidence="2">
    <location>
        <begin position="1387"/>
        <end position="1475"/>
    </location>
</feature>
<feature type="compositionally biased region" description="Polar residues" evidence="2">
    <location>
        <begin position="1"/>
        <end position="10"/>
    </location>
</feature>
<feature type="compositionally biased region" description="Low complexity" evidence="2">
    <location>
        <begin position="621"/>
        <end position="641"/>
    </location>
</feature>
<feature type="compositionally biased region" description="Low complexity" evidence="2">
    <location>
        <begin position="711"/>
        <end position="729"/>
    </location>
</feature>
<feature type="compositionally biased region" description="Low complexity" evidence="2">
    <location>
        <begin position="738"/>
        <end position="782"/>
    </location>
</feature>
<feature type="compositionally biased region" description="Polar residues" evidence="2">
    <location>
        <begin position="860"/>
        <end position="874"/>
    </location>
</feature>
<feature type="compositionally biased region" description="Polar residues" evidence="2">
    <location>
        <begin position="888"/>
        <end position="897"/>
    </location>
</feature>
<feature type="compositionally biased region" description="Low complexity" evidence="2">
    <location>
        <begin position="919"/>
        <end position="934"/>
    </location>
</feature>
<feature type="compositionally biased region" description="Pro residues" evidence="2">
    <location>
        <begin position="944"/>
        <end position="953"/>
    </location>
</feature>
<feature type="compositionally biased region" description="Low complexity" evidence="2">
    <location>
        <begin position="954"/>
        <end position="966"/>
    </location>
</feature>
<feature type="compositionally biased region" description="Low complexity" evidence="2">
    <location>
        <begin position="973"/>
        <end position="989"/>
    </location>
</feature>
<feature type="compositionally biased region" description="Low complexity" evidence="2">
    <location>
        <begin position="1143"/>
        <end position="1159"/>
    </location>
</feature>
<feature type="compositionally biased region" description="Low complexity" evidence="2">
    <location>
        <begin position="1185"/>
        <end position="1225"/>
    </location>
</feature>
<feature type="compositionally biased region" description="Low complexity" evidence="2">
    <location>
        <begin position="1265"/>
        <end position="1276"/>
    </location>
</feature>
<feature type="compositionally biased region" description="Polar residues" evidence="2">
    <location>
        <begin position="1286"/>
        <end position="1296"/>
    </location>
</feature>
<feature type="compositionally biased region" description="Low complexity" evidence="2">
    <location>
        <begin position="1334"/>
        <end position="1346"/>
    </location>
</feature>
<feature type="compositionally biased region" description="Low complexity" evidence="2">
    <location>
        <begin position="1399"/>
        <end position="1409"/>
    </location>
</feature>
<feature type="compositionally biased region" description="Polar residues" evidence="2">
    <location>
        <begin position="1415"/>
        <end position="1430"/>
    </location>
</feature>
<feature type="compositionally biased region" description="Polar residues" evidence="2">
    <location>
        <begin position="1442"/>
        <end position="1458"/>
    </location>
</feature>
<feature type="modified residue" description="Phosphoserine" evidence="4">
    <location>
        <position position="830"/>
    </location>
</feature>
<feature type="modified residue" description="Phosphoserine" evidence="4">
    <location>
        <position position="834"/>
    </location>
</feature>
<feature type="modified residue" description="Phosphoserine" evidence="4">
    <location>
        <position position="854"/>
    </location>
</feature>
<feature type="modified residue" description="Phosphoserine" evidence="4">
    <location>
        <position position="858"/>
    </location>
</feature>
<sequence length="1475" mass="149531">MSGSNAKSSGTGFGSHIPSIEEKNKQIQQETMMEKLRAKYRNKPKSYEEIKKSVRMYFIEKHYPLDPLCKATLQSALDKLQHYIKVTSRHGLVERLESLSRQLGLKFMEDQQLLFISTDMFYVEILLDAAGSLSDVKVHHECKIEQQSSELVACLKSGDFADFTVQLEGLSSIYQLNAEPKVKKKAFVALQAMETDIQSLYQLHLQGHSGDSYSLMTSSSVGLVLPRRGGHPMRLTYFCPPLHLPEGDPKLASGDFTIDQVMRSSYGLSATINLEGSSANKLQTLPTVTLVRDAQTGLEVPTYAQLNQNNSLLMPATFVLRLNKPMPVCLESLKALGLPGLDSVATPPGPPTTVLNLIVQTASKQAIKNTQRGLYVNLPKETHCYFFTDNRKLQGTLVSSLPFTEPAQVPRIVAFLKKQALFYTLLASCVREQQKQYNDMDSTVILEVTAVSFNQITVELQHPYEESLATVDFLLEDGQPTCSVYCLTNEYELLSQKLTRTARKVVSIPMVIYKLLKCWDEEHEFKLHGAIGPGSGSGAIGGGGMSGGGPVSGVGNNFSQFSMDTPTPSDGSLPGGGFANINNLKMDAKSRSLADAFAASTSAAAAIAGLINLKRETDPQSGSSASGTTVSGSSSSSGSAKTSDHDIADKYKNIWKDKTPNLKHCVSITPIPGDGKSGSAGGVSGVEVQRTGGIEIIPLNAQAAIAGGGVTASSSATPTTITITPITGKDPSKDSTKKSTAASAGVGVAAKRPHESSTSSSSTSGCSGSGSSMSSSASSGSSDTQKEKKRKKKRDDSPMGPPEKIYSRQNSPAGGADASATGGVVRKFSSPSSSPKAGGGGQGLMAGVPTARPSPKHSPVYSSPKHNTASNSPKSPFGTHSPKHGSSGKPSMSTLKSAATAATILSPKGDKSSSAVGNTSSGPSASSGSSGATGLVRSFASVGAPPPPPPIPPLASSSGSISSSQSLKKEKTSSASGSSSTSSSATAGVASGGGISPASVAAAVAALKSSQQQMKSVASLSHLAAGGGLGSYAAPSGAGASGAAAVVVGAGAGAGAGASGLELSALRKGMAGGAVSLMTSTAALAPTIPAPTTTVAAGSAASLVSPVSAVVGQGQETAGAAAAATLATATILQQQPQPGAAPTSSCLTTSGGSSDSAGSINPAGASTEYMVKPSSQEGLKLTINKTGSSKSSGTGSGSSSSSGLQAKAKSSSSGATSFAGSTGSTKKQHTGLKPGVNSGPASKKATAAVSSATASSSKHFFQKANSSGNLSSKLSGSGSGGGIPLTKSNSTNSFQEHNAPRRRPSMGALASGSSGGGSGQRKLGSASGGGSGSSGSVSPALSGSMSQPPPRFDHHTDMMTILQYASPTMAASMEGFIKGLHNKFQIPKLSQRGSGGNTTSGRSTPSGSSEPALAGTSSSILGPIASSTGLTEPEAKPPVPPSQSGNEGLLNLSSTAGTPSADGIDEELLASLAGE</sequence>
<comment type="function">
    <text evidence="1 3">Component of the Mediator complex, a coactivator involved in the regulated transcription of nearly all RNA polymerase II-dependent genes. Mediator functions as a bridge to convey information from gene-specific regulatory proteins to the basal RNA polymerase II transcription machinery. Mediator is recruited to promoters by direct interactions with regulatory proteins and serves as a scaffold for the assembly of a functional preinitiation complex with RNA polymerase II and the general transcription factors (By similarity). Required for activated transcription of the MtnA, MtnB and MtnD genes.</text>
</comment>
<comment type="subunit">
    <text evidence="1">Component of the Mediator complex.</text>
</comment>
<comment type="subcellular location">
    <subcellularLocation>
        <location evidence="1">Nucleus</location>
    </subcellularLocation>
</comment>
<comment type="similarity">
    <text evidence="5">Belongs to the Mediator complex subunit 1 family.</text>
</comment>
<proteinExistence type="evidence at protein level"/>
<reference key="1">
    <citation type="submission" date="2000-07" db="EMBL/GenBank/DDBJ databases">
        <title>Transcriptional coactivators in Drosophila.</title>
        <authorList>
            <person name="Southworth J.W."/>
            <person name="Kennison J.A."/>
        </authorList>
    </citation>
    <scope>NUCLEOTIDE SEQUENCE [MRNA]</scope>
</reference>
<reference key="2">
    <citation type="journal article" date="2000" name="Science">
        <title>The genome sequence of Drosophila melanogaster.</title>
        <authorList>
            <person name="Adams M.D."/>
            <person name="Celniker S.E."/>
            <person name="Holt R.A."/>
            <person name="Evans C.A."/>
            <person name="Gocayne J.D."/>
            <person name="Amanatides P.G."/>
            <person name="Scherer S.E."/>
            <person name="Li P.W."/>
            <person name="Hoskins R.A."/>
            <person name="Galle R.F."/>
            <person name="George R.A."/>
            <person name="Lewis S.E."/>
            <person name="Richards S."/>
            <person name="Ashburner M."/>
            <person name="Henderson S.N."/>
            <person name="Sutton G.G."/>
            <person name="Wortman J.R."/>
            <person name="Yandell M.D."/>
            <person name="Zhang Q."/>
            <person name="Chen L.X."/>
            <person name="Brandon R.C."/>
            <person name="Rogers Y.-H.C."/>
            <person name="Blazej R.G."/>
            <person name="Champe M."/>
            <person name="Pfeiffer B.D."/>
            <person name="Wan K.H."/>
            <person name="Doyle C."/>
            <person name="Baxter E.G."/>
            <person name="Helt G."/>
            <person name="Nelson C.R."/>
            <person name="Miklos G.L.G."/>
            <person name="Abril J.F."/>
            <person name="Agbayani A."/>
            <person name="An H.-J."/>
            <person name="Andrews-Pfannkoch C."/>
            <person name="Baldwin D."/>
            <person name="Ballew R.M."/>
            <person name="Basu A."/>
            <person name="Baxendale J."/>
            <person name="Bayraktaroglu L."/>
            <person name="Beasley E.M."/>
            <person name="Beeson K.Y."/>
            <person name="Benos P.V."/>
            <person name="Berman B.P."/>
            <person name="Bhandari D."/>
            <person name="Bolshakov S."/>
            <person name="Borkova D."/>
            <person name="Botchan M.R."/>
            <person name="Bouck J."/>
            <person name="Brokstein P."/>
            <person name="Brottier P."/>
            <person name="Burtis K.C."/>
            <person name="Busam D.A."/>
            <person name="Butler H."/>
            <person name="Cadieu E."/>
            <person name="Center A."/>
            <person name="Chandra I."/>
            <person name="Cherry J.M."/>
            <person name="Cawley S."/>
            <person name="Dahlke C."/>
            <person name="Davenport L.B."/>
            <person name="Davies P."/>
            <person name="de Pablos B."/>
            <person name="Delcher A."/>
            <person name="Deng Z."/>
            <person name="Mays A.D."/>
            <person name="Dew I."/>
            <person name="Dietz S.M."/>
            <person name="Dodson K."/>
            <person name="Doup L.E."/>
            <person name="Downes M."/>
            <person name="Dugan-Rocha S."/>
            <person name="Dunkov B.C."/>
            <person name="Dunn P."/>
            <person name="Durbin K.J."/>
            <person name="Evangelista C.C."/>
            <person name="Ferraz C."/>
            <person name="Ferriera S."/>
            <person name="Fleischmann W."/>
            <person name="Fosler C."/>
            <person name="Gabrielian A.E."/>
            <person name="Garg N.S."/>
            <person name="Gelbart W.M."/>
            <person name="Glasser K."/>
            <person name="Glodek A."/>
            <person name="Gong F."/>
            <person name="Gorrell J.H."/>
            <person name="Gu Z."/>
            <person name="Guan P."/>
            <person name="Harris M."/>
            <person name="Harris N.L."/>
            <person name="Harvey D.A."/>
            <person name="Heiman T.J."/>
            <person name="Hernandez J.R."/>
            <person name="Houck J."/>
            <person name="Hostin D."/>
            <person name="Houston K.A."/>
            <person name="Howland T.J."/>
            <person name="Wei M.-H."/>
            <person name="Ibegwam C."/>
            <person name="Jalali M."/>
            <person name="Kalush F."/>
            <person name="Karpen G.H."/>
            <person name="Ke Z."/>
            <person name="Kennison J.A."/>
            <person name="Ketchum K.A."/>
            <person name="Kimmel B.E."/>
            <person name="Kodira C.D."/>
            <person name="Kraft C.L."/>
            <person name="Kravitz S."/>
            <person name="Kulp D."/>
            <person name="Lai Z."/>
            <person name="Lasko P."/>
            <person name="Lei Y."/>
            <person name="Levitsky A.A."/>
            <person name="Li J.H."/>
            <person name="Li Z."/>
            <person name="Liang Y."/>
            <person name="Lin X."/>
            <person name="Liu X."/>
            <person name="Mattei B."/>
            <person name="McIntosh T.C."/>
            <person name="McLeod M.P."/>
            <person name="McPherson D."/>
            <person name="Merkulov G."/>
            <person name="Milshina N.V."/>
            <person name="Mobarry C."/>
            <person name="Morris J."/>
            <person name="Moshrefi A."/>
            <person name="Mount S.M."/>
            <person name="Moy M."/>
            <person name="Murphy B."/>
            <person name="Murphy L."/>
            <person name="Muzny D.M."/>
            <person name="Nelson D.L."/>
            <person name="Nelson D.R."/>
            <person name="Nelson K.A."/>
            <person name="Nixon K."/>
            <person name="Nusskern D.R."/>
            <person name="Pacleb J.M."/>
            <person name="Palazzolo M."/>
            <person name="Pittman G.S."/>
            <person name="Pan S."/>
            <person name="Pollard J."/>
            <person name="Puri V."/>
            <person name="Reese M.G."/>
            <person name="Reinert K."/>
            <person name="Remington K."/>
            <person name="Saunders R.D.C."/>
            <person name="Scheeler F."/>
            <person name="Shen H."/>
            <person name="Shue B.C."/>
            <person name="Siden-Kiamos I."/>
            <person name="Simpson M."/>
            <person name="Skupski M.P."/>
            <person name="Smith T.J."/>
            <person name="Spier E."/>
            <person name="Spradling A.C."/>
            <person name="Stapleton M."/>
            <person name="Strong R."/>
            <person name="Sun E."/>
            <person name="Svirskas R."/>
            <person name="Tector C."/>
            <person name="Turner R."/>
            <person name="Venter E."/>
            <person name="Wang A.H."/>
            <person name="Wang X."/>
            <person name="Wang Z.-Y."/>
            <person name="Wassarman D.A."/>
            <person name="Weinstock G.M."/>
            <person name="Weissenbach J."/>
            <person name="Williams S.M."/>
            <person name="Woodage T."/>
            <person name="Worley K.C."/>
            <person name="Wu D."/>
            <person name="Yang S."/>
            <person name="Yao Q.A."/>
            <person name="Ye J."/>
            <person name="Yeh R.-F."/>
            <person name="Zaveri J.S."/>
            <person name="Zhan M."/>
            <person name="Zhang G."/>
            <person name="Zhao Q."/>
            <person name="Zheng L."/>
            <person name="Zheng X.H."/>
            <person name="Zhong F.N."/>
            <person name="Zhong W."/>
            <person name="Zhou X."/>
            <person name="Zhu S.C."/>
            <person name="Zhu X."/>
            <person name="Smith H.O."/>
            <person name="Gibbs R.A."/>
            <person name="Myers E.W."/>
            <person name="Rubin G.M."/>
            <person name="Venter J.C."/>
        </authorList>
    </citation>
    <scope>NUCLEOTIDE SEQUENCE [LARGE SCALE GENOMIC DNA]</scope>
    <source>
        <strain>Berkeley</strain>
    </source>
</reference>
<reference key="3">
    <citation type="journal article" date="2002" name="Genome Biol.">
        <title>Annotation of the Drosophila melanogaster euchromatic genome: a systematic review.</title>
        <authorList>
            <person name="Misra S."/>
            <person name="Crosby M.A."/>
            <person name="Mungall C.J."/>
            <person name="Matthews B.B."/>
            <person name="Campbell K.S."/>
            <person name="Hradecky P."/>
            <person name="Huang Y."/>
            <person name="Kaminker J.S."/>
            <person name="Millburn G.H."/>
            <person name="Prochnik S.E."/>
            <person name="Smith C.D."/>
            <person name="Tupy J.L."/>
            <person name="Whitfield E.J."/>
            <person name="Bayraktaroglu L."/>
            <person name="Berman B.P."/>
            <person name="Bettencourt B.R."/>
            <person name="Celniker S.E."/>
            <person name="de Grey A.D.N.J."/>
            <person name="Drysdale R.A."/>
            <person name="Harris N.L."/>
            <person name="Richter J."/>
            <person name="Russo S."/>
            <person name="Schroeder A.J."/>
            <person name="Shu S.Q."/>
            <person name="Stapleton M."/>
            <person name="Yamada C."/>
            <person name="Ashburner M."/>
            <person name="Gelbart W.M."/>
            <person name="Rubin G.M."/>
            <person name="Lewis S.E."/>
        </authorList>
    </citation>
    <scope>GENOME REANNOTATION</scope>
    <source>
        <strain>Berkeley</strain>
    </source>
</reference>
<reference key="4">
    <citation type="submission" date="2008-09" db="EMBL/GenBank/DDBJ databases">
        <authorList>
            <person name="Carlson J.W."/>
            <person name="Booth B."/>
            <person name="Frise E."/>
            <person name="Park S."/>
            <person name="Wan K.H."/>
            <person name="Yu C."/>
            <person name="Celniker S.E."/>
        </authorList>
    </citation>
    <scope>NUCLEOTIDE SEQUENCE [LARGE SCALE MRNA]</scope>
    <source>
        <strain>Berkeley</strain>
        <tissue>Head</tissue>
    </source>
</reference>
<reference key="5">
    <citation type="journal article" date="2006" name="Genes Dev.">
        <title>Coactivator cross-talk specifies transcriptional output.</title>
        <authorList>
            <person name="Marr M.T. II"/>
            <person name="Isogai Y."/>
            <person name="Wright K.J."/>
            <person name="Tjian R."/>
        </authorList>
    </citation>
    <scope>FUNCTION</scope>
</reference>
<reference key="6">
    <citation type="journal article" date="2008" name="J. Proteome Res.">
        <title>Phosphoproteome analysis of Drosophila melanogaster embryos.</title>
        <authorList>
            <person name="Zhai B."/>
            <person name="Villen J."/>
            <person name="Beausoleil S.A."/>
            <person name="Mintseris J."/>
            <person name="Gygi S.P."/>
        </authorList>
    </citation>
    <scope>PHOSPHORYLATION [LARGE SCALE ANALYSIS] AT SER-830; SER-834; SER-854 AND SER-858</scope>
    <scope>IDENTIFICATION BY MASS SPECTROMETRY</scope>
    <source>
        <tissue>Embryo</tissue>
    </source>
</reference>